<keyword id="KW-0997">Cell inner membrane</keyword>
<keyword id="KW-1003">Cell membrane</keyword>
<keyword id="KW-0444">Lipid biosynthesis</keyword>
<keyword id="KW-0443">Lipid metabolism</keyword>
<keyword id="KW-0472">Membrane</keyword>
<keyword id="KW-0594">Phospholipid biosynthesis</keyword>
<keyword id="KW-1208">Phospholipid metabolism</keyword>
<keyword id="KW-0808">Transferase</keyword>
<keyword id="KW-0812">Transmembrane</keyword>
<keyword id="KW-1133">Transmembrane helix</keyword>
<dbReference type="EC" id="2.3.1.275" evidence="1"/>
<dbReference type="EMBL" id="CP000949">
    <property type="protein sequence ID" value="ACA75287.1"/>
    <property type="molecule type" value="Genomic_DNA"/>
</dbReference>
<dbReference type="SMR" id="B1JDY4"/>
<dbReference type="STRING" id="390235.PputW619_4811"/>
<dbReference type="KEGG" id="ppw:PputW619_4811"/>
<dbReference type="eggNOG" id="COG0344">
    <property type="taxonomic scope" value="Bacteria"/>
</dbReference>
<dbReference type="HOGENOM" id="CLU_081254_0_0_6"/>
<dbReference type="OrthoDB" id="9777124at2"/>
<dbReference type="UniPathway" id="UPA00085"/>
<dbReference type="GO" id="GO:0005886">
    <property type="term" value="C:plasma membrane"/>
    <property type="evidence" value="ECO:0007669"/>
    <property type="project" value="UniProtKB-SubCell"/>
</dbReference>
<dbReference type="GO" id="GO:0043772">
    <property type="term" value="F:acyl-phosphate glycerol-3-phosphate acyltransferase activity"/>
    <property type="evidence" value="ECO:0007669"/>
    <property type="project" value="UniProtKB-UniRule"/>
</dbReference>
<dbReference type="GO" id="GO:0008654">
    <property type="term" value="P:phospholipid biosynthetic process"/>
    <property type="evidence" value="ECO:0007669"/>
    <property type="project" value="UniProtKB-UniRule"/>
</dbReference>
<dbReference type="HAMAP" id="MF_01043">
    <property type="entry name" value="PlsY"/>
    <property type="match status" value="1"/>
</dbReference>
<dbReference type="InterPro" id="IPR003811">
    <property type="entry name" value="G3P_acylTferase_PlsY"/>
</dbReference>
<dbReference type="NCBIfam" id="TIGR00023">
    <property type="entry name" value="glycerol-3-phosphate 1-O-acyltransferase PlsY"/>
    <property type="match status" value="1"/>
</dbReference>
<dbReference type="PANTHER" id="PTHR30309:SF0">
    <property type="entry name" value="GLYCEROL-3-PHOSPHATE ACYLTRANSFERASE-RELATED"/>
    <property type="match status" value="1"/>
</dbReference>
<dbReference type="PANTHER" id="PTHR30309">
    <property type="entry name" value="INNER MEMBRANE PROTEIN YGIH"/>
    <property type="match status" value="1"/>
</dbReference>
<dbReference type="Pfam" id="PF02660">
    <property type="entry name" value="G3P_acyltransf"/>
    <property type="match status" value="1"/>
</dbReference>
<dbReference type="SMART" id="SM01207">
    <property type="entry name" value="G3P_acyltransf"/>
    <property type="match status" value="1"/>
</dbReference>
<feature type="chain" id="PRO_1000136110" description="Glycerol-3-phosphate acyltransferase">
    <location>
        <begin position="1"/>
        <end position="189"/>
    </location>
</feature>
<feature type="transmembrane region" description="Helical" evidence="1">
    <location>
        <begin position="1"/>
        <end position="21"/>
    </location>
</feature>
<feature type="transmembrane region" description="Helical" evidence="1">
    <location>
        <begin position="77"/>
        <end position="97"/>
    </location>
</feature>
<feature type="transmembrane region" description="Helical" evidence="1">
    <location>
        <begin position="111"/>
        <end position="131"/>
    </location>
</feature>
<feature type="transmembrane region" description="Helical" evidence="1">
    <location>
        <begin position="151"/>
        <end position="171"/>
    </location>
</feature>
<proteinExistence type="inferred from homology"/>
<name>PLSY_PSEPW</name>
<protein>
    <recommendedName>
        <fullName evidence="1">Glycerol-3-phosphate acyltransferase</fullName>
    </recommendedName>
    <alternativeName>
        <fullName evidence="1">Acyl-PO4 G3P acyltransferase</fullName>
    </alternativeName>
    <alternativeName>
        <fullName evidence="1">Acyl-phosphate--glycerol-3-phosphate acyltransferase</fullName>
    </alternativeName>
    <alternativeName>
        <fullName evidence="1">G3P acyltransferase</fullName>
        <shortName evidence="1">GPAT</shortName>
        <ecNumber evidence="1">2.3.1.275</ecNumber>
    </alternativeName>
    <alternativeName>
        <fullName evidence="1">Lysophosphatidic acid synthase</fullName>
        <shortName evidence="1">LPA synthase</shortName>
    </alternativeName>
</protein>
<accession>B1JDY4</accession>
<comment type="function">
    <text evidence="1">Catalyzes the transfer of an acyl group from acyl-phosphate (acyl-PO(4)) to glycerol-3-phosphate (G3P) to form lysophosphatidic acid (LPA). This enzyme utilizes acyl-phosphate as fatty acyl donor, but not acyl-CoA or acyl-ACP.</text>
</comment>
<comment type="catalytic activity">
    <reaction evidence="1">
        <text>an acyl phosphate + sn-glycerol 3-phosphate = a 1-acyl-sn-glycero-3-phosphate + phosphate</text>
        <dbReference type="Rhea" id="RHEA:34075"/>
        <dbReference type="ChEBI" id="CHEBI:43474"/>
        <dbReference type="ChEBI" id="CHEBI:57597"/>
        <dbReference type="ChEBI" id="CHEBI:57970"/>
        <dbReference type="ChEBI" id="CHEBI:59918"/>
        <dbReference type="EC" id="2.3.1.275"/>
    </reaction>
</comment>
<comment type="pathway">
    <text evidence="1">Lipid metabolism; phospholipid metabolism.</text>
</comment>
<comment type="subunit">
    <text evidence="1">Probably interacts with PlsX.</text>
</comment>
<comment type="subcellular location">
    <subcellularLocation>
        <location evidence="1">Cell inner membrane</location>
        <topology evidence="1">Multi-pass membrane protein</topology>
    </subcellularLocation>
</comment>
<comment type="similarity">
    <text evidence="1">Belongs to the PlsY family.</text>
</comment>
<gene>
    <name evidence="1" type="primary">plsY</name>
    <name type="ordered locus">PputW619_4811</name>
</gene>
<reference key="1">
    <citation type="submission" date="2008-02" db="EMBL/GenBank/DDBJ databases">
        <title>Complete sequence of Pseudomonas putida W619.</title>
        <authorList>
            <person name="Copeland A."/>
            <person name="Lucas S."/>
            <person name="Lapidus A."/>
            <person name="Barry K."/>
            <person name="Detter J.C."/>
            <person name="Glavina del Rio T."/>
            <person name="Dalin E."/>
            <person name="Tice H."/>
            <person name="Pitluck S."/>
            <person name="Chain P."/>
            <person name="Malfatti S."/>
            <person name="Shin M."/>
            <person name="Vergez L."/>
            <person name="Schmutz J."/>
            <person name="Larimer F."/>
            <person name="Land M."/>
            <person name="Hauser L."/>
            <person name="Kyrpides N."/>
            <person name="Kim E."/>
            <person name="Taghavi S."/>
            <person name="Vangronsveld D."/>
            <person name="van der Lelie D."/>
            <person name="Richardson P."/>
        </authorList>
    </citation>
    <scope>NUCLEOTIDE SEQUENCE [LARGE SCALE GENOMIC DNA]</scope>
    <source>
        <strain>W619</strain>
    </source>
</reference>
<sequence length="189" mass="20452">MFWLLALLAYLLGSLSFAIVLSRLSGSPDPRSCGSGNAGATNMLRLAGRKMAILTLLGDLCKGLLPVMLARLAGLDLQEQAWVGVCAVLGHLFPVYFRFQGGKGVATAAGMLMGLYFPAALLAIAAWLLTFYLTRTSSLAALIATPLTLPLLAWREPAALLPISVLTVMIVWRHRNNLRDLFAGRERHF</sequence>
<organism>
    <name type="scientific">Pseudomonas putida (strain W619)</name>
    <dbReference type="NCBI Taxonomy" id="390235"/>
    <lineage>
        <taxon>Bacteria</taxon>
        <taxon>Pseudomonadati</taxon>
        <taxon>Pseudomonadota</taxon>
        <taxon>Gammaproteobacteria</taxon>
        <taxon>Pseudomonadales</taxon>
        <taxon>Pseudomonadaceae</taxon>
        <taxon>Pseudomonas</taxon>
    </lineage>
</organism>
<evidence type="ECO:0000255" key="1">
    <source>
        <dbReference type="HAMAP-Rule" id="MF_01043"/>
    </source>
</evidence>